<evidence type="ECO:0000305" key="1"/>
<sequence>MGSRDFISSLPDEVLGKKILSLLPTKLVVSTSVLSKRWRNLFHFVDSFDLEDSTPIRNADSFSDFMKDTVALLSNCPIKRLTLNSHYEKSSVNRWIRSALKRGCLELNLQSQYDHYLDIGIFFRNNTLVKLTLSSYRTFLRGNVPPEGRVFFPALKTLSLGAVVAKPALYNWLISGCPVLEELFILDVGSGDDQPTWTRSVVSASIKRLTIVFHFPHNTYPYEDDVEIKTPNLEFLDYSALRSDGSDVDYLDSLAEARLDLRLWELTNTFDFGEVTNLVSAIRNVKTLHLSSSSLEAFYYRCYTMPVFDKLIHLSIESDKENGWQALPRLLLKSPNLQTLAIKGLLHKVTYRCGNACACTSKPKKRYLYKRYEDDSPTSEVEGRCCLSTCRVKVLEISGYGGSLREVKQMEHFLRKLKYLETVKIGVEEDNDSEHLRTELMTLDIASSKCNIQFI</sequence>
<organism>
    <name type="scientific">Arabidopsis thaliana</name>
    <name type="common">Mouse-ear cress</name>
    <dbReference type="NCBI Taxonomy" id="3702"/>
    <lineage>
        <taxon>Eukaryota</taxon>
        <taxon>Viridiplantae</taxon>
        <taxon>Streptophyta</taxon>
        <taxon>Embryophyta</taxon>
        <taxon>Tracheophyta</taxon>
        <taxon>Spermatophyta</taxon>
        <taxon>Magnoliopsida</taxon>
        <taxon>eudicotyledons</taxon>
        <taxon>Gunneridae</taxon>
        <taxon>Pentapetalae</taxon>
        <taxon>rosids</taxon>
        <taxon>malvids</taxon>
        <taxon>Brassicales</taxon>
        <taxon>Brassicaceae</taxon>
        <taxon>Camelineae</taxon>
        <taxon>Arabidopsis</taxon>
    </lineage>
</organism>
<name>FBL84_ARATH</name>
<keyword id="KW-0433">Leucine-rich repeat</keyword>
<keyword id="KW-1185">Reference proteome</keyword>
<keyword id="KW-0677">Repeat</keyword>
<gene>
    <name type="ordered locus">At5g35995</name>
    <name type="ORF">MEE13.11</name>
</gene>
<accession>Q56W59</accession>
<accession>Q9FGB9</accession>
<protein>
    <recommendedName>
        <fullName>F-box/LRR-repeat protein At5g35995</fullName>
    </recommendedName>
</protein>
<comment type="sequence caution" evidence="1">
    <conflict type="erroneous gene model prediction">
        <sequence resource="EMBL-CDS" id="BAB09256"/>
    </conflict>
</comment>
<reference key="1">
    <citation type="submission" date="1999-04" db="EMBL/GenBank/DDBJ databases">
        <title>Structural analysis of Arabidopsis thaliana chromosome 5. XI.</title>
        <authorList>
            <person name="Kaneko T."/>
            <person name="Katoh T."/>
            <person name="Asamizu E."/>
            <person name="Sato S."/>
            <person name="Nakamura Y."/>
            <person name="Kotani H."/>
            <person name="Tabata S."/>
        </authorList>
    </citation>
    <scope>NUCLEOTIDE SEQUENCE [LARGE SCALE GENOMIC DNA]</scope>
    <source>
        <strain>cv. Columbia</strain>
    </source>
</reference>
<reference key="2">
    <citation type="journal article" date="2017" name="Plant J.">
        <title>Araport11: a complete reannotation of the Arabidopsis thaliana reference genome.</title>
        <authorList>
            <person name="Cheng C.Y."/>
            <person name="Krishnakumar V."/>
            <person name="Chan A.P."/>
            <person name="Thibaud-Nissen F."/>
            <person name="Schobel S."/>
            <person name="Town C.D."/>
        </authorList>
    </citation>
    <scope>GENOME REANNOTATION</scope>
    <source>
        <strain>cv. Columbia</strain>
    </source>
</reference>
<reference key="3">
    <citation type="submission" date="2005-03" db="EMBL/GenBank/DDBJ databases">
        <title>Large-scale analysis of RIKEN Arabidopsis full-length (RAFL) cDNAs.</title>
        <authorList>
            <person name="Totoki Y."/>
            <person name="Seki M."/>
            <person name="Ishida J."/>
            <person name="Nakajima M."/>
            <person name="Enju A."/>
            <person name="Kamiya A."/>
            <person name="Narusaka M."/>
            <person name="Shin-i T."/>
            <person name="Nakagawa M."/>
            <person name="Sakamoto N."/>
            <person name="Oishi K."/>
            <person name="Kohara Y."/>
            <person name="Kobayashi M."/>
            <person name="Toyoda A."/>
            <person name="Sakaki Y."/>
            <person name="Sakurai T."/>
            <person name="Iida K."/>
            <person name="Akiyama K."/>
            <person name="Satou M."/>
            <person name="Toyoda T."/>
            <person name="Konagaya A."/>
            <person name="Carninci P."/>
            <person name="Kawai J."/>
            <person name="Hayashizaki Y."/>
            <person name="Shinozaki K."/>
        </authorList>
    </citation>
    <scope>NUCLEOTIDE SEQUENCE [LARGE SCALE MRNA]</scope>
    <source>
        <strain>cv. Columbia</strain>
    </source>
</reference>
<reference key="4">
    <citation type="submission" date="2006-09" db="EMBL/GenBank/DDBJ databases">
        <title>Arabidopsis ORF clones.</title>
        <authorList>
            <person name="Kim C.J."/>
            <person name="Chen H."/>
            <person name="Quinitio C."/>
            <person name="Shinn P."/>
            <person name="Ecker J.R."/>
        </authorList>
    </citation>
    <scope>NUCLEOTIDE SEQUENCE [LARGE SCALE MRNA]</scope>
    <source>
        <strain>cv. Columbia</strain>
    </source>
</reference>
<proteinExistence type="evidence at transcript level"/>
<dbReference type="EMBL" id="AB026643">
    <property type="protein sequence ID" value="BAB09256.1"/>
    <property type="status" value="ALT_SEQ"/>
    <property type="molecule type" value="Genomic_DNA"/>
</dbReference>
<dbReference type="EMBL" id="CP002688">
    <property type="protein sequence ID" value="AED94037.1"/>
    <property type="molecule type" value="Genomic_DNA"/>
</dbReference>
<dbReference type="EMBL" id="CP002688">
    <property type="protein sequence ID" value="AED94038.1"/>
    <property type="molecule type" value="Genomic_DNA"/>
</dbReference>
<dbReference type="EMBL" id="AK222188">
    <property type="protein sequence ID" value="BAD95326.1"/>
    <property type="molecule type" value="mRNA"/>
</dbReference>
<dbReference type="EMBL" id="BT028977">
    <property type="protein sequence ID" value="ABI93886.1"/>
    <property type="molecule type" value="mRNA"/>
</dbReference>
<dbReference type="RefSeq" id="NP_001031971.1">
    <property type="nucleotide sequence ID" value="NM_001036894.3"/>
</dbReference>
<dbReference type="RefSeq" id="NP_680353.2">
    <property type="nucleotide sequence ID" value="NM_148048.3"/>
</dbReference>
<dbReference type="SMR" id="Q56W59"/>
<dbReference type="FunCoup" id="Q56W59">
    <property type="interactions" value="81"/>
</dbReference>
<dbReference type="PaxDb" id="3702-AT5G35995.2"/>
<dbReference type="ProteomicsDB" id="222581"/>
<dbReference type="EnsemblPlants" id="AT5G35995.1">
    <property type="protein sequence ID" value="AT5G35995.1"/>
    <property type="gene ID" value="AT5G35995"/>
</dbReference>
<dbReference type="EnsemblPlants" id="AT5G35995.2">
    <property type="protein sequence ID" value="AT5G35995.2"/>
    <property type="gene ID" value="AT5G35995"/>
</dbReference>
<dbReference type="GeneID" id="833592"/>
<dbReference type="Gramene" id="AT5G35995.1">
    <property type="protein sequence ID" value="AT5G35995.1"/>
    <property type="gene ID" value="AT5G35995"/>
</dbReference>
<dbReference type="Gramene" id="AT5G35995.2">
    <property type="protein sequence ID" value="AT5G35995.2"/>
    <property type="gene ID" value="AT5G35995"/>
</dbReference>
<dbReference type="KEGG" id="ath:AT5G35995"/>
<dbReference type="Araport" id="AT5G35995"/>
<dbReference type="TAIR" id="AT5G35995"/>
<dbReference type="HOGENOM" id="CLU_010721_7_1_1"/>
<dbReference type="InParanoid" id="Q56W59"/>
<dbReference type="PhylomeDB" id="Q56W59"/>
<dbReference type="PRO" id="PR:Q56W59"/>
<dbReference type="Proteomes" id="UP000006548">
    <property type="component" value="Chromosome 5"/>
</dbReference>
<dbReference type="ExpressionAtlas" id="Q56W59">
    <property type="expression patterns" value="baseline and differential"/>
</dbReference>
<dbReference type="CDD" id="cd22160">
    <property type="entry name" value="F-box_AtFBL13-like"/>
    <property type="match status" value="1"/>
</dbReference>
<dbReference type="Gene3D" id="1.20.1280.50">
    <property type="match status" value="1"/>
</dbReference>
<dbReference type="InterPro" id="IPR036047">
    <property type="entry name" value="F-box-like_dom_sf"/>
</dbReference>
<dbReference type="InterPro" id="IPR053781">
    <property type="entry name" value="F-box_AtFBL13-like"/>
</dbReference>
<dbReference type="InterPro" id="IPR001810">
    <property type="entry name" value="F-box_dom"/>
</dbReference>
<dbReference type="InterPro" id="IPR006566">
    <property type="entry name" value="FBD"/>
</dbReference>
<dbReference type="InterPro" id="IPR055294">
    <property type="entry name" value="FBL60-like"/>
</dbReference>
<dbReference type="InterPro" id="IPR055411">
    <property type="entry name" value="LRR_FXL15/At3g58940/PEG3-like"/>
</dbReference>
<dbReference type="PANTHER" id="PTHR31293:SF27">
    <property type="entry name" value="BNACNNG35480D PROTEIN"/>
    <property type="match status" value="1"/>
</dbReference>
<dbReference type="PANTHER" id="PTHR31293">
    <property type="entry name" value="RNI-LIKE SUPERFAMILY PROTEIN"/>
    <property type="match status" value="1"/>
</dbReference>
<dbReference type="Pfam" id="PF00646">
    <property type="entry name" value="F-box"/>
    <property type="match status" value="1"/>
</dbReference>
<dbReference type="Pfam" id="PF24758">
    <property type="entry name" value="LRR_At5g56370"/>
    <property type="match status" value="1"/>
</dbReference>
<dbReference type="SMART" id="SM00579">
    <property type="entry name" value="FBD"/>
    <property type="match status" value="1"/>
</dbReference>
<dbReference type="SUPFAM" id="SSF81383">
    <property type="entry name" value="F-box domain"/>
    <property type="match status" value="1"/>
</dbReference>
<dbReference type="SUPFAM" id="SSF52047">
    <property type="entry name" value="RNI-like"/>
    <property type="match status" value="1"/>
</dbReference>
<feature type="chain" id="PRO_0000281981" description="F-box/LRR-repeat protein At5g35995">
    <location>
        <begin position="1"/>
        <end position="455"/>
    </location>
</feature>
<feature type="domain" description="F-box">
    <location>
        <begin position="4"/>
        <end position="51"/>
    </location>
</feature>
<feature type="repeat" description="LRR 1">
    <location>
        <begin position="114"/>
        <end position="138"/>
    </location>
</feature>
<feature type="repeat" description="LRR 2">
    <location>
        <begin position="152"/>
        <end position="176"/>
    </location>
</feature>
<feature type="repeat" description="LRR 3">
    <location>
        <begin position="282"/>
        <end position="305"/>
    </location>
</feature>
<feature type="repeat" description="LRR 4">
    <location>
        <begin position="308"/>
        <end position="324"/>
    </location>
</feature>
<feature type="repeat" description="LRR 5">
    <location>
        <begin position="325"/>
        <end position="348"/>
    </location>
</feature>